<organism>
    <name type="scientific">Gorilla gorilla gorilla</name>
    <name type="common">Western lowland gorilla</name>
    <dbReference type="NCBI Taxonomy" id="9595"/>
    <lineage>
        <taxon>Eukaryota</taxon>
        <taxon>Metazoa</taxon>
        <taxon>Chordata</taxon>
        <taxon>Craniata</taxon>
        <taxon>Vertebrata</taxon>
        <taxon>Euteleostomi</taxon>
        <taxon>Mammalia</taxon>
        <taxon>Eutheria</taxon>
        <taxon>Euarchontoglires</taxon>
        <taxon>Primates</taxon>
        <taxon>Haplorrhini</taxon>
        <taxon>Catarrhini</taxon>
        <taxon>Hominidae</taxon>
        <taxon>Gorilla</taxon>
    </lineage>
</organism>
<sequence>MAPSALLRPLSRLLAPARLPSGPSVRSKFYVREPPNAKPDWLKVGFTLGTTVFLWVYLIKQHNEDILEYKRRNGLE</sequence>
<comment type="function">
    <text evidence="2">Accessory subunit of the mitochondrial membrane respiratory chain NADH dehydrogenase (Complex I), that is believed not to be involved in catalysis. Complex I functions in the transfer of electrons from NADH to the respiratory chain. The immediate electron acceptor for the enzyme is believed to be ubiquinone.</text>
</comment>
<comment type="subunit">
    <text evidence="2">Complex I is composed of 45 different subunits.</text>
</comment>
<comment type="subcellular location">
    <subcellularLocation>
        <location evidence="3">Mitochondrion inner membrane</location>
        <topology evidence="3">Single-pass membrane protein</topology>
        <orientation evidence="3">Matrix side</orientation>
    </subcellularLocation>
</comment>
<comment type="similarity">
    <text evidence="5">Belongs to the complex I NDUFC1 subunit family.</text>
</comment>
<keyword id="KW-0249">Electron transport</keyword>
<keyword id="KW-0472">Membrane</keyword>
<keyword id="KW-0496">Mitochondrion</keyword>
<keyword id="KW-0999">Mitochondrion inner membrane</keyword>
<keyword id="KW-1185">Reference proteome</keyword>
<keyword id="KW-0679">Respiratory chain</keyword>
<keyword id="KW-0809">Transit peptide</keyword>
<keyword id="KW-0812">Transmembrane</keyword>
<keyword id="KW-1133">Transmembrane helix</keyword>
<keyword id="KW-0813">Transport</keyword>
<protein>
    <recommendedName>
        <fullName>NADH dehydrogenase [ubiquinone] 1 subunit C1, mitochondrial</fullName>
    </recommendedName>
    <alternativeName>
        <fullName>Complex I-KFYI</fullName>
        <shortName>CI-KFYI</shortName>
    </alternativeName>
    <alternativeName>
        <fullName>NADH-ubiquinone oxidoreductase KFYI subunit</fullName>
    </alternativeName>
</protein>
<name>NDUC1_GORGO</name>
<feature type="transit peptide" description="Mitochondrion" evidence="1">
    <location>
        <begin position="1"/>
        <end position="27"/>
    </location>
</feature>
<feature type="chain" id="PRO_0000251848" description="NADH dehydrogenase [ubiquinone] 1 subunit C1, mitochondrial">
    <location>
        <begin position="28"/>
        <end position="76"/>
    </location>
</feature>
<feature type="transmembrane region" description="Helical" evidence="4">
    <location>
        <begin position="41"/>
        <end position="59"/>
    </location>
</feature>
<evidence type="ECO:0000250" key="1"/>
<evidence type="ECO:0000250" key="2">
    <source>
        <dbReference type="UniProtKB" id="O43677"/>
    </source>
</evidence>
<evidence type="ECO:0000250" key="3">
    <source>
        <dbReference type="UniProtKB" id="Q02376"/>
    </source>
</evidence>
<evidence type="ECO:0000255" key="4"/>
<evidence type="ECO:0000305" key="5"/>
<accession>Q0MQF5</accession>
<dbReference type="EMBL" id="DQ885679">
    <property type="protein sequence ID" value="ABH12188.1"/>
    <property type="molecule type" value="mRNA"/>
</dbReference>
<dbReference type="RefSeq" id="XP_004040447.1">
    <property type="nucleotide sequence ID" value="XM_004040399.4"/>
</dbReference>
<dbReference type="RefSeq" id="XP_004040450.1">
    <property type="nucleotide sequence ID" value="XM_004040402.3"/>
</dbReference>
<dbReference type="RefSeq" id="XP_004040451.1">
    <property type="nucleotide sequence ID" value="XM_004040403.3"/>
</dbReference>
<dbReference type="RefSeq" id="XP_055240698.1">
    <property type="nucleotide sequence ID" value="XM_055384723.2"/>
</dbReference>
<dbReference type="RefSeq" id="XP_055240699.1">
    <property type="nucleotide sequence ID" value="XM_055384724.1"/>
</dbReference>
<dbReference type="RefSeq" id="XP_063561623.1">
    <property type="nucleotide sequence ID" value="XM_063705553.1"/>
</dbReference>
<dbReference type="SMR" id="Q0MQF5"/>
<dbReference type="FunCoup" id="Q0MQF5">
    <property type="interactions" value="352"/>
</dbReference>
<dbReference type="STRING" id="9593.ENSGGOP00000047456"/>
<dbReference type="Ensembl" id="ENSGGOT00000004854.3">
    <property type="protein sequence ID" value="ENSGGOP00000004732.2"/>
    <property type="gene ID" value="ENSGGOG00000004832.3"/>
</dbReference>
<dbReference type="Ensembl" id="ENSGGOT00000063777.1">
    <property type="protein sequence ID" value="ENSGGOP00000047456.1"/>
    <property type="gene ID" value="ENSGGOG00000004832.3"/>
</dbReference>
<dbReference type="GeneID" id="101134553"/>
<dbReference type="CTD" id="4717"/>
<dbReference type="eggNOG" id="ENOG502SFTF">
    <property type="taxonomic scope" value="Eukaryota"/>
</dbReference>
<dbReference type="GeneTree" id="ENSGT00390000002565"/>
<dbReference type="HOGENOM" id="CLU_199185_0_0_1"/>
<dbReference type="InParanoid" id="Q0MQF5"/>
<dbReference type="OMA" id="SAFIWGL"/>
<dbReference type="Proteomes" id="UP000001519">
    <property type="component" value="Chromosome 4"/>
</dbReference>
<dbReference type="Bgee" id="ENSGGOG00000004832">
    <property type="expression patterns" value="Expressed in heart and 6 other cell types or tissues"/>
</dbReference>
<dbReference type="GO" id="GO:0005743">
    <property type="term" value="C:mitochondrial inner membrane"/>
    <property type="evidence" value="ECO:0007669"/>
    <property type="project" value="UniProtKB-SubCell"/>
</dbReference>
<dbReference type="GO" id="GO:0045271">
    <property type="term" value="C:respiratory chain complex I"/>
    <property type="evidence" value="ECO:0000250"/>
    <property type="project" value="UniProtKB"/>
</dbReference>
<dbReference type="InterPro" id="IPR026192">
    <property type="entry name" value="NDUFC1"/>
</dbReference>
<dbReference type="PANTHER" id="PTHR17097:SF0">
    <property type="entry name" value="NADH DEHYDROGENASE [UBIQUINONE] 1 SUBUNIT C1, MITOCHONDRIAL"/>
    <property type="match status" value="1"/>
</dbReference>
<dbReference type="PANTHER" id="PTHR17097">
    <property type="entry name" value="NADH-UBIQUINONE OXIDOREDUCTASE KFYI SUBUNIT"/>
    <property type="match status" value="1"/>
</dbReference>
<dbReference type="Pfam" id="PF15088">
    <property type="entry name" value="NADH_dh_m_C1"/>
    <property type="match status" value="1"/>
</dbReference>
<gene>
    <name type="primary">NDUFC1</name>
</gene>
<reference key="1">
    <citation type="journal article" date="2006" name="Gene">
        <title>Adaptive selection of mitochondrial complex I subunits during primate radiation.</title>
        <authorList>
            <person name="Mishmar D."/>
            <person name="Ruiz-Pesini E."/>
            <person name="Mondragon-Palomino M."/>
            <person name="Procaccio V."/>
            <person name="Gaut B."/>
            <person name="Wallace D.C."/>
        </authorList>
    </citation>
    <scope>NUCLEOTIDE SEQUENCE [MRNA]</scope>
</reference>
<proteinExistence type="inferred from homology"/>